<evidence type="ECO:0000255" key="1">
    <source>
        <dbReference type="HAMAP-Rule" id="MF_00605"/>
    </source>
</evidence>
<accession>Q5N0W7</accession>
<name>TRMD_SYNP6</name>
<reference key="1">
    <citation type="journal article" date="2007" name="Photosyn. Res.">
        <title>Complete nucleotide sequence of the freshwater unicellular cyanobacterium Synechococcus elongatus PCC 6301 chromosome: gene content and organization.</title>
        <authorList>
            <person name="Sugita C."/>
            <person name="Ogata K."/>
            <person name="Shikata M."/>
            <person name="Jikuya H."/>
            <person name="Takano J."/>
            <person name="Furumichi M."/>
            <person name="Kanehisa M."/>
            <person name="Omata T."/>
            <person name="Sugiura M."/>
            <person name="Sugita M."/>
        </authorList>
    </citation>
    <scope>NUCLEOTIDE SEQUENCE [LARGE SCALE GENOMIC DNA]</scope>
    <source>
        <strain>ATCC 27144 / PCC 6301 / SAUG 1402/1</strain>
    </source>
</reference>
<feature type="chain" id="PRO_0000060481" description="tRNA (guanine-N(1)-)-methyltransferase">
    <location>
        <begin position="1"/>
        <end position="235"/>
    </location>
</feature>
<feature type="binding site" evidence="1">
    <location>
        <position position="112"/>
    </location>
    <ligand>
        <name>S-adenosyl-L-methionine</name>
        <dbReference type="ChEBI" id="CHEBI:59789"/>
    </ligand>
</feature>
<feature type="binding site" evidence="1">
    <location>
        <begin position="131"/>
        <end position="136"/>
    </location>
    <ligand>
        <name>S-adenosyl-L-methionine</name>
        <dbReference type="ChEBI" id="CHEBI:59789"/>
    </ligand>
</feature>
<organism>
    <name type="scientific">Synechococcus sp. (strain ATCC 27144 / PCC 6301 / SAUG 1402/1)</name>
    <name type="common">Anacystis nidulans</name>
    <dbReference type="NCBI Taxonomy" id="269084"/>
    <lineage>
        <taxon>Bacteria</taxon>
        <taxon>Bacillati</taxon>
        <taxon>Cyanobacteriota</taxon>
        <taxon>Cyanophyceae</taxon>
        <taxon>Synechococcales</taxon>
        <taxon>Synechococcaceae</taxon>
        <taxon>Synechococcus</taxon>
    </lineage>
</organism>
<comment type="function">
    <text evidence="1">Specifically methylates guanosine-37 in various tRNAs.</text>
</comment>
<comment type="catalytic activity">
    <reaction evidence="1">
        <text>guanosine(37) in tRNA + S-adenosyl-L-methionine = N(1)-methylguanosine(37) in tRNA + S-adenosyl-L-homocysteine + H(+)</text>
        <dbReference type="Rhea" id="RHEA:36899"/>
        <dbReference type="Rhea" id="RHEA-COMP:10145"/>
        <dbReference type="Rhea" id="RHEA-COMP:10147"/>
        <dbReference type="ChEBI" id="CHEBI:15378"/>
        <dbReference type="ChEBI" id="CHEBI:57856"/>
        <dbReference type="ChEBI" id="CHEBI:59789"/>
        <dbReference type="ChEBI" id="CHEBI:73542"/>
        <dbReference type="ChEBI" id="CHEBI:74269"/>
        <dbReference type="EC" id="2.1.1.228"/>
    </reaction>
</comment>
<comment type="subunit">
    <text evidence="1">Homodimer.</text>
</comment>
<comment type="subcellular location">
    <subcellularLocation>
        <location evidence="1">Cytoplasm</location>
    </subcellularLocation>
</comment>
<comment type="similarity">
    <text evidence="1">Belongs to the RNA methyltransferase TrmD family.</text>
</comment>
<dbReference type="EC" id="2.1.1.228" evidence="1"/>
<dbReference type="EMBL" id="AP008231">
    <property type="protein sequence ID" value="BAD80053.1"/>
    <property type="molecule type" value="Genomic_DNA"/>
</dbReference>
<dbReference type="RefSeq" id="WP_011244173.1">
    <property type="nucleotide sequence ID" value="NZ_CP085785.1"/>
</dbReference>
<dbReference type="SMR" id="Q5N0W7"/>
<dbReference type="GeneID" id="72431117"/>
<dbReference type="KEGG" id="syc:syc1863_c"/>
<dbReference type="eggNOG" id="COG0336">
    <property type="taxonomic scope" value="Bacteria"/>
</dbReference>
<dbReference type="Proteomes" id="UP000001175">
    <property type="component" value="Chromosome"/>
</dbReference>
<dbReference type="GO" id="GO:0005829">
    <property type="term" value="C:cytosol"/>
    <property type="evidence" value="ECO:0007669"/>
    <property type="project" value="TreeGrafter"/>
</dbReference>
<dbReference type="GO" id="GO:0052906">
    <property type="term" value="F:tRNA (guanine(37)-N1)-methyltransferase activity"/>
    <property type="evidence" value="ECO:0007669"/>
    <property type="project" value="UniProtKB-UniRule"/>
</dbReference>
<dbReference type="GO" id="GO:0002939">
    <property type="term" value="P:tRNA N1-guanine methylation"/>
    <property type="evidence" value="ECO:0007669"/>
    <property type="project" value="TreeGrafter"/>
</dbReference>
<dbReference type="CDD" id="cd18080">
    <property type="entry name" value="TrmD-like"/>
    <property type="match status" value="1"/>
</dbReference>
<dbReference type="FunFam" id="1.10.1270.20:FF:000004">
    <property type="entry name" value="tRNA (guanine-N(1)-)-methyltransferase"/>
    <property type="match status" value="1"/>
</dbReference>
<dbReference type="FunFam" id="3.40.1280.10:FF:000001">
    <property type="entry name" value="tRNA (guanine-N(1)-)-methyltransferase"/>
    <property type="match status" value="1"/>
</dbReference>
<dbReference type="Gene3D" id="3.40.1280.10">
    <property type="match status" value="1"/>
</dbReference>
<dbReference type="Gene3D" id="1.10.1270.20">
    <property type="entry name" value="tRNA(m1g37)methyltransferase, domain 2"/>
    <property type="match status" value="1"/>
</dbReference>
<dbReference type="HAMAP" id="MF_00605">
    <property type="entry name" value="TrmD"/>
    <property type="match status" value="1"/>
</dbReference>
<dbReference type="InterPro" id="IPR029028">
    <property type="entry name" value="Alpha/beta_knot_MTases"/>
</dbReference>
<dbReference type="InterPro" id="IPR023148">
    <property type="entry name" value="tRNA_m1G_MeTrfase_C_sf"/>
</dbReference>
<dbReference type="InterPro" id="IPR002649">
    <property type="entry name" value="tRNA_m1G_MeTrfase_TrmD"/>
</dbReference>
<dbReference type="InterPro" id="IPR029026">
    <property type="entry name" value="tRNA_m1G_MTases_N"/>
</dbReference>
<dbReference type="InterPro" id="IPR016009">
    <property type="entry name" value="tRNA_MeTrfase_TRMD/TRM10"/>
</dbReference>
<dbReference type="NCBIfam" id="NF000648">
    <property type="entry name" value="PRK00026.1"/>
    <property type="match status" value="1"/>
</dbReference>
<dbReference type="NCBIfam" id="TIGR00088">
    <property type="entry name" value="trmD"/>
    <property type="match status" value="1"/>
</dbReference>
<dbReference type="PANTHER" id="PTHR46417">
    <property type="entry name" value="TRNA (GUANINE-N(1)-)-METHYLTRANSFERASE"/>
    <property type="match status" value="1"/>
</dbReference>
<dbReference type="PANTHER" id="PTHR46417:SF1">
    <property type="entry name" value="TRNA (GUANINE-N(1)-)-METHYLTRANSFERASE"/>
    <property type="match status" value="1"/>
</dbReference>
<dbReference type="Pfam" id="PF01746">
    <property type="entry name" value="tRNA_m1G_MT"/>
    <property type="match status" value="1"/>
</dbReference>
<dbReference type="PIRSF" id="PIRSF000386">
    <property type="entry name" value="tRNA_mtase"/>
    <property type="match status" value="1"/>
</dbReference>
<dbReference type="SUPFAM" id="SSF75217">
    <property type="entry name" value="alpha/beta knot"/>
    <property type="match status" value="1"/>
</dbReference>
<proteinExistence type="inferred from homology"/>
<protein>
    <recommendedName>
        <fullName evidence="1">tRNA (guanine-N(1)-)-methyltransferase</fullName>
        <ecNumber evidence="1">2.1.1.228</ecNumber>
    </recommendedName>
    <alternativeName>
        <fullName evidence="1">M1G-methyltransferase</fullName>
    </alternativeName>
    <alternativeName>
        <fullName evidence="1">tRNA [GM37] methyltransferase</fullName>
    </alternativeName>
</protein>
<sequence>MRFDLITLFPEFFHSPLQSGLIAKAIAKGLAEVHCTNPRDFTCDRHHKVDDEPYGGGAGMVLKPEPLAAALESLPVVTPRQVIYLSPQGEPMTQALFQDLATSVEQLVLVCGHYEGIDERVMTWIDREISLGDFVLTCGEIPALALLNGVLRLRPGTIGKEESHRCDSFSDGLLDYPHYTRPAEFRGLKVPEVLLSGNHGAIAAWRRQQQLERTRDRRPDLYQAWQAQQSDLDSH</sequence>
<gene>
    <name evidence="1" type="primary">trmD</name>
    <name type="ordered locus">syc1863_c</name>
</gene>
<keyword id="KW-0963">Cytoplasm</keyword>
<keyword id="KW-0489">Methyltransferase</keyword>
<keyword id="KW-0949">S-adenosyl-L-methionine</keyword>
<keyword id="KW-0808">Transferase</keyword>
<keyword id="KW-0819">tRNA processing</keyword>